<reference key="1">
    <citation type="journal article" date="1999" name="Nature">
        <title>Sequence and analysis of chromosome 4 of the plant Arabidopsis thaliana.</title>
        <authorList>
            <person name="Mayer K.F.X."/>
            <person name="Schueller C."/>
            <person name="Wambutt R."/>
            <person name="Murphy G."/>
            <person name="Volckaert G."/>
            <person name="Pohl T."/>
            <person name="Duesterhoeft A."/>
            <person name="Stiekema W."/>
            <person name="Entian K.-D."/>
            <person name="Terryn N."/>
            <person name="Harris B."/>
            <person name="Ansorge W."/>
            <person name="Brandt P."/>
            <person name="Grivell L.A."/>
            <person name="Rieger M."/>
            <person name="Weichselgartner M."/>
            <person name="de Simone V."/>
            <person name="Obermaier B."/>
            <person name="Mache R."/>
            <person name="Mueller M."/>
            <person name="Kreis M."/>
            <person name="Delseny M."/>
            <person name="Puigdomenech P."/>
            <person name="Watson M."/>
            <person name="Schmidtheini T."/>
            <person name="Reichert B."/>
            <person name="Portetelle D."/>
            <person name="Perez-Alonso M."/>
            <person name="Boutry M."/>
            <person name="Bancroft I."/>
            <person name="Vos P."/>
            <person name="Hoheisel J."/>
            <person name="Zimmermann W."/>
            <person name="Wedler H."/>
            <person name="Ridley P."/>
            <person name="Langham S.-A."/>
            <person name="McCullagh B."/>
            <person name="Bilham L."/>
            <person name="Robben J."/>
            <person name="van der Schueren J."/>
            <person name="Grymonprez B."/>
            <person name="Chuang Y.-J."/>
            <person name="Vandenbussche F."/>
            <person name="Braeken M."/>
            <person name="Weltjens I."/>
            <person name="Voet M."/>
            <person name="Bastiaens I."/>
            <person name="Aert R."/>
            <person name="Defoor E."/>
            <person name="Weitzenegger T."/>
            <person name="Bothe G."/>
            <person name="Ramsperger U."/>
            <person name="Hilbert H."/>
            <person name="Braun M."/>
            <person name="Holzer E."/>
            <person name="Brandt A."/>
            <person name="Peters S."/>
            <person name="van Staveren M."/>
            <person name="Dirkse W."/>
            <person name="Mooijman P."/>
            <person name="Klein Lankhorst R."/>
            <person name="Rose M."/>
            <person name="Hauf J."/>
            <person name="Koetter P."/>
            <person name="Berneiser S."/>
            <person name="Hempel S."/>
            <person name="Feldpausch M."/>
            <person name="Lamberth S."/>
            <person name="Van den Daele H."/>
            <person name="De Keyser A."/>
            <person name="Buysshaert C."/>
            <person name="Gielen J."/>
            <person name="Villarroel R."/>
            <person name="De Clercq R."/>
            <person name="van Montagu M."/>
            <person name="Rogers J."/>
            <person name="Cronin A."/>
            <person name="Quail M.A."/>
            <person name="Bray-Allen S."/>
            <person name="Clark L."/>
            <person name="Doggett J."/>
            <person name="Hall S."/>
            <person name="Kay M."/>
            <person name="Lennard N."/>
            <person name="McLay K."/>
            <person name="Mayes R."/>
            <person name="Pettett A."/>
            <person name="Rajandream M.A."/>
            <person name="Lyne M."/>
            <person name="Benes V."/>
            <person name="Rechmann S."/>
            <person name="Borkova D."/>
            <person name="Bloecker H."/>
            <person name="Scharfe M."/>
            <person name="Grimm M."/>
            <person name="Loehnert T.-H."/>
            <person name="Dose S."/>
            <person name="de Haan M."/>
            <person name="Maarse A.C."/>
            <person name="Schaefer M."/>
            <person name="Mueller-Auer S."/>
            <person name="Gabel C."/>
            <person name="Fuchs M."/>
            <person name="Fartmann B."/>
            <person name="Granderath K."/>
            <person name="Dauner D."/>
            <person name="Herzl A."/>
            <person name="Neumann S."/>
            <person name="Argiriou A."/>
            <person name="Vitale D."/>
            <person name="Liguori R."/>
            <person name="Piravandi E."/>
            <person name="Massenet O."/>
            <person name="Quigley F."/>
            <person name="Clabauld G."/>
            <person name="Muendlein A."/>
            <person name="Felber R."/>
            <person name="Schnabl S."/>
            <person name="Hiller R."/>
            <person name="Schmidt W."/>
            <person name="Lecharny A."/>
            <person name="Aubourg S."/>
            <person name="Chefdor F."/>
            <person name="Cooke R."/>
            <person name="Berger C."/>
            <person name="Monfort A."/>
            <person name="Casacuberta E."/>
            <person name="Gibbons T."/>
            <person name="Weber N."/>
            <person name="Vandenbol M."/>
            <person name="Bargues M."/>
            <person name="Terol J."/>
            <person name="Torres A."/>
            <person name="Perez-Perez A."/>
            <person name="Purnelle B."/>
            <person name="Bent E."/>
            <person name="Johnson S."/>
            <person name="Tacon D."/>
            <person name="Jesse T."/>
            <person name="Heijnen L."/>
            <person name="Schwarz S."/>
            <person name="Scholler P."/>
            <person name="Heber S."/>
            <person name="Francs P."/>
            <person name="Bielke C."/>
            <person name="Frishman D."/>
            <person name="Haase D."/>
            <person name="Lemcke K."/>
            <person name="Mewes H.-W."/>
            <person name="Stocker S."/>
            <person name="Zaccaria P."/>
            <person name="Bevan M."/>
            <person name="Wilson R.K."/>
            <person name="de la Bastide M."/>
            <person name="Habermann K."/>
            <person name="Parnell L."/>
            <person name="Dedhia N."/>
            <person name="Gnoj L."/>
            <person name="Schutz K."/>
            <person name="Huang E."/>
            <person name="Spiegel L."/>
            <person name="Sekhon M."/>
            <person name="Murray J."/>
            <person name="Sheet P."/>
            <person name="Cordes M."/>
            <person name="Abu-Threideh J."/>
            <person name="Stoneking T."/>
            <person name="Kalicki J."/>
            <person name="Graves T."/>
            <person name="Harmon G."/>
            <person name="Edwards J."/>
            <person name="Latreille P."/>
            <person name="Courtney L."/>
            <person name="Cloud J."/>
            <person name="Abbott A."/>
            <person name="Scott K."/>
            <person name="Johnson D."/>
            <person name="Minx P."/>
            <person name="Bentley D."/>
            <person name="Fulton B."/>
            <person name="Miller N."/>
            <person name="Greco T."/>
            <person name="Kemp K."/>
            <person name="Kramer J."/>
            <person name="Fulton L."/>
            <person name="Mardis E."/>
            <person name="Dante M."/>
            <person name="Pepin K."/>
            <person name="Hillier L.W."/>
            <person name="Nelson J."/>
            <person name="Spieth J."/>
            <person name="Ryan E."/>
            <person name="Andrews S."/>
            <person name="Geisel C."/>
            <person name="Layman D."/>
            <person name="Du H."/>
            <person name="Ali J."/>
            <person name="Berghoff A."/>
            <person name="Jones K."/>
            <person name="Drone K."/>
            <person name="Cotton M."/>
            <person name="Joshu C."/>
            <person name="Antonoiu B."/>
            <person name="Zidanic M."/>
            <person name="Strong C."/>
            <person name="Sun H."/>
            <person name="Lamar B."/>
            <person name="Yordan C."/>
            <person name="Ma P."/>
            <person name="Zhong J."/>
            <person name="Preston R."/>
            <person name="Vil D."/>
            <person name="Shekher M."/>
            <person name="Matero A."/>
            <person name="Shah R."/>
            <person name="Swaby I.K."/>
            <person name="O'Shaughnessy A."/>
            <person name="Rodriguez M."/>
            <person name="Hoffman J."/>
            <person name="Till S."/>
            <person name="Granat S."/>
            <person name="Shohdy N."/>
            <person name="Hasegawa A."/>
            <person name="Hameed A."/>
            <person name="Lodhi M."/>
            <person name="Johnson A."/>
            <person name="Chen E."/>
            <person name="Marra M.A."/>
            <person name="Martienssen R."/>
            <person name="McCombie W.R."/>
        </authorList>
    </citation>
    <scope>NUCLEOTIDE SEQUENCE [LARGE SCALE GENOMIC DNA]</scope>
    <source>
        <strain>cv. Columbia</strain>
    </source>
</reference>
<reference key="2">
    <citation type="journal article" date="2017" name="Plant J.">
        <title>Araport11: a complete reannotation of the Arabidopsis thaliana reference genome.</title>
        <authorList>
            <person name="Cheng C.Y."/>
            <person name="Krishnakumar V."/>
            <person name="Chan A.P."/>
            <person name="Thibaud-Nissen F."/>
            <person name="Schobel S."/>
            <person name="Town C.D."/>
        </authorList>
    </citation>
    <scope>GENOME REANNOTATION</scope>
    <source>
        <strain>cv. Columbia</strain>
    </source>
</reference>
<reference key="3">
    <citation type="journal article" date="2003" name="Science">
        <title>Empirical analysis of transcriptional activity in the Arabidopsis genome.</title>
        <authorList>
            <person name="Yamada K."/>
            <person name="Lim J."/>
            <person name="Dale J.M."/>
            <person name="Chen H."/>
            <person name="Shinn P."/>
            <person name="Palm C.J."/>
            <person name="Southwick A.M."/>
            <person name="Wu H.C."/>
            <person name="Kim C.J."/>
            <person name="Nguyen M."/>
            <person name="Pham P.K."/>
            <person name="Cheuk R.F."/>
            <person name="Karlin-Newmann G."/>
            <person name="Liu S.X."/>
            <person name="Lam B."/>
            <person name="Sakano H."/>
            <person name="Wu T."/>
            <person name="Yu G."/>
            <person name="Miranda M."/>
            <person name="Quach H.L."/>
            <person name="Tripp M."/>
            <person name="Chang C.H."/>
            <person name="Lee J.M."/>
            <person name="Toriumi M.J."/>
            <person name="Chan M.M."/>
            <person name="Tang C.C."/>
            <person name="Onodera C.S."/>
            <person name="Deng J.M."/>
            <person name="Akiyama K."/>
            <person name="Ansari Y."/>
            <person name="Arakawa T."/>
            <person name="Banh J."/>
            <person name="Banno F."/>
            <person name="Bowser L."/>
            <person name="Brooks S.Y."/>
            <person name="Carninci P."/>
            <person name="Chao Q."/>
            <person name="Choy N."/>
            <person name="Enju A."/>
            <person name="Goldsmith A.D."/>
            <person name="Gurjal M."/>
            <person name="Hansen N.F."/>
            <person name="Hayashizaki Y."/>
            <person name="Johnson-Hopson C."/>
            <person name="Hsuan V.W."/>
            <person name="Iida K."/>
            <person name="Karnes M."/>
            <person name="Khan S."/>
            <person name="Koesema E."/>
            <person name="Ishida J."/>
            <person name="Jiang P.X."/>
            <person name="Jones T."/>
            <person name="Kawai J."/>
            <person name="Kamiya A."/>
            <person name="Meyers C."/>
            <person name="Nakajima M."/>
            <person name="Narusaka M."/>
            <person name="Seki M."/>
            <person name="Sakurai T."/>
            <person name="Satou M."/>
            <person name="Tamse R."/>
            <person name="Vaysberg M."/>
            <person name="Wallender E.K."/>
            <person name="Wong C."/>
            <person name="Yamamura Y."/>
            <person name="Yuan S."/>
            <person name="Shinozaki K."/>
            <person name="Davis R.W."/>
            <person name="Theologis A."/>
            <person name="Ecker J.R."/>
        </authorList>
    </citation>
    <scope>NUCLEOTIDE SEQUENCE [LARGE SCALE MRNA]</scope>
    <source>
        <strain>cv. Columbia</strain>
    </source>
</reference>
<reference key="4">
    <citation type="submission" date="2006-07" db="EMBL/GenBank/DDBJ databases">
        <title>Large-scale analysis of RIKEN Arabidopsis full-length (RAFL) cDNAs.</title>
        <authorList>
            <person name="Totoki Y."/>
            <person name="Seki M."/>
            <person name="Ishida J."/>
            <person name="Nakajima M."/>
            <person name="Enju A."/>
            <person name="Kamiya A."/>
            <person name="Narusaka M."/>
            <person name="Shin-i T."/>
            <person name="Nakagawa M."/>
            <person name="Sakamoto N."/>
            <person name="Oishi K."/>
            <person name="Kohara Y."/>
            <person name="Kobayashi M."/>
            <person name="Toyoda A."/>
            <person name="Sakaki Y."/>
            <person name="Sakurai T."/>
            <person name="Iida K."/>
            <person name="Akiyama K."/>
            <person name="Satou M."/>
            <person name="Toyoda T."/>
            <person name="Konagaya A."/>
            <person name="Carninci P."/>
            <person name="Kawai J."/>
            <person name="Hayashizaki Y."/>
            <person name="Shinozaki K."/>
        </authorList>
    </citation>
    <scope>NUCLEOTIDE SEQUENCE [LARGE SCALE MRNA]</scope>
    <source>
        <strain>cv. Columbia</strain>
    </source>
</reference>
<feature type="chain" id="PRO_0000430293" description="Probable magnesium transporter NIPA5">
    <location>
        <begin position="1"/>
        <end position="386"/>
    </location>
</feature>
<feature type="topological domain" description="Extracellular" evidence="2">
    <location>
        <begin position="1"/>
        <end position="18"/>
    </location>
</feature>
<feature type="transmembrane region" description="Helical; Name=1" evidence="2">
    <location>
        <begin position="19"/>
        <end position="39"/>
    </location>
</feature>
<feature type="topological domain" description="Cytoplasmic" evidence="2">
    <location>
        <begin position="40"/>
        <end position="61"/>
    </location>
</feature>
<feature type="transmembrane region" description="Helical; Name=2" evidence="2">
    <location>
        <begin position="62"/>
        <end position="82"/>
    </location>
</feature>
<feature type="transmembrane region" description="Helical; Name=3" evidence="2">
    <location>
        <begin position="83"/>
        <end position="103"/>
    </location>
</feature>
<feature type="topological domain" description="Cytoplasmic" evidence="2">
    <location>
        <begin position="104"/>
        <end position="115"/>
    </location>
</feature>
<feature type="transmembrane region" description="Helical; Name=4" evidence="2">
    <location>
        <begin position="116"/>
        <end position="136"/>
    </location>
</feature>
<feature type="topological domain" description="Extracellular" evidence="2">
    <location>
        <begin position="137"/>
        <end position="157"/>
    </location>
</feature>
<feature type="transmembrane region" description="Helical; Name=5" evidence="2">
    <location>
        <begin position="158"/>
        <end position="178"/>
    </location>
</feature>
<feature type="topological domain" description="Cytoplasmic" evidence="2">
    <location>
        <begin position="179"/>
        <end position="189"/>
    </location>
</feature>
<feature type="transmembrane region" description="Helical; Name=6" evidence="2">
    <location>
        <begin position="190"/>
        <end position="210"/>
    </location>
</feature>
<feature type="topological domain" description="Extracellular" evidence="2">
    <location>
        <begin position="211"/>
        <end position="220"/>
    </location>
</feature>
<feature type="transmembrane region" description="Helical; Name=7" evidence="2">
    <location>
        <begin position="221"/>
        <end position="241"/>
    </location>
</feature>
<feature type="topological domain" description="Cytoplasmic" evidence="2">
    <location>
        <begin position="242"/>
        <end position="255"/>
    </location>
</feature>
<feature type="transmembrane region" description="Helical; Name=8" evidence="2">
    <location>
        <begin position="256"/>
        <end position="276"/>
    </location>
</feature>
<feature type="topological domain" description="Extracellular" evidence="2">
    <location>
        <begin position="277"/>
        <end position="283"/>
    </location>
</feature>
<feature type="transmembrane region" description="Helical; Name=9" evidence="2">
    <location>
        <begin position="284"/>
        <end position="304"/>
    </location>
</feature>
<feature type="topological domain" description="Cytoplasmic" evidence="2">
    <location>
        <begin position="305"/>
        <end position="386"/>
    </location>
</feature>
<feature type="region of interest" description="Disordered" evidence="3">
    <location>
        <begin position="352"/>
        <end position="386"/>
    </location>
</feature>
<feature type="compositionally biased region" description="Basic and acidic residues" evidence="3">
    <location>
        <begin position="376"/>
        <end position="386"/>
    </location>
</feature>
<protein>
    <recommendedName>
        <fullName>Probable magnesium transporter NIPA5</fullName>
    </recommendedName>
</protein>
<organism>
    <name type="scientific">Arabidopsis thaliana</name>
    <name type="common">Mouse-ear cress</name>
    <dbReference type="NCBI Taxonomy" id="3702"/>
    <lineage>
        <taxon>Eukaryota</taxon>
        <taxon>Viridiplantae</taxon>
        <taxon>Streptophyta</taxon>
        <taxon>Embryophyta</taxon>
        <taxon>Tracheophyta</taxon>
        <taxon>Spermatophyta</taxon>
        <taxon>Magnoliopsida</taxon>
        <taxon>eudicotyledons</taxon>
        <taxon>Gunneridae</taxon>
        <taxon>Pentapetalae</taxon>
        <taxon>rosids</taxon>
        <taxon>malvids</taxon>
        <taxon>Brassicales</taxon>
        <taxon>Brassicaceae</taxon>
        <taxon>Camelineae</taxon>
        <taxon>Arabidopsis</taxon>
    </lineage>
</organism>
<keyword id="KW-1003">Cell membrane</keyword>
<keyword id="KW-0967">Endosome</keyword>
<keyword id="KW-0406">Ion transport</keyword>
<keyword id="KW-0460">Magnesium</keyword>
<keyword id="KW-0472">Membrane</keyword>
<keyword id="KW-1185">Reference proteome</keyword>
<keyword id="KW-0812">Transmembrane</keyword>
<keyword id="KW-1133">Transmembrane helix</keyword>
<keyword id="KW-0813">Transport</keyword>
<accession>F4JKQ7</accession>
<accession>Q9SST0</accession>
<sequence>MVYSSGSWRDAYKGMSSDNVKGLVLALSSSIFIGASFIVKKKGLKKAGASGLRAGSGGYSYLLEPLWWIGMITMIVGEIANFAAYAFAPAILVTPLGALSIIISASLAHIILQEKLHTFGILGCALCIVGSVTIVLHAPQEQDIVSVLEVWNLATEPAFLFYAAAVVGAAIVLIVQFIPLYGQSHVMVYIGVCSLIGSLSVMSVKALGIALKLTFSGTNQLGYPQTWVFTVIVLFCVITQMNYLNKALDTFNTAVVSPIYYVMFTSLTILASVIMFKDWDRQSGTQIMTELCGFVTILSGTFLLHTTTDMVDGESKGNLSSEEDSHLLLRIPKHSEDSNGFVQDGIILSLRRQESAKSPRPARQNKQLEDDLEAVPLRRQESSLRS</sequence>
<evidence type="ECO:0000250" key="1"/>
<evidence type="ECO:0000255" key="2"/>
<evidence type="ECO:0000256" key="3">
    <source>
        <dbReference type="SAM" id="MobiDB-lite"/>
    </source>
</evidence>
<evidence type="ECO:0000305" key="4"/>
<proteinExistence type="evidence at transcript level"/>
<gene>
    <name type="ordered locus">At4g09640</name>
    <name type="ORF">T25P22.80</name>
</gene>
<dbReference type="EMBL" id="AL161515">
    <property type="protein sequence ID" value="CAB78087.1"/>
    <property type="status" value="ALT_SEQ"/>
    <property type="molecule type" value="Genomic_DNA"/>
</dbReference>
<dbReference type="EMBL" id="AL161831">
    <property type="protein sequence ID" value="CAB82131.1"/>
    <property type="status" value="ALT_SEQ"/>
    <property type="molecule type" value="Genomic_DNA"/>
</dbReference>
<dbReference type="EMBL" id="CP002687">
    <property type="protein sequence ID" value="AEE82774.1"/>
    <property type="molecule type" value="Genomic_DNA"/>
</dbReference>
<dbReference type="EMBL" id="BT005717">
    <property type="status" value="NOT_ANNOTATED_CDS"/>
    <property type="molecule type" value="mRNA"/>
</dbReference>
<dbReference type="EMBL" id="AK228399">
    <property type="status" value="NOT_ANNOTATED_CDS"/>
    <property type="molecule type" value="mRNA"/>
</dbReference>
<dbReference type="PIR" id="F85098">
    <property type="entry name" value="F85098"/>
</dbReference>
<dbReference type="RefSeq" id="NP_192702.2">
    <property type="nucleotide sequence ID" value="NM_117032.4"/>
</dbReference>
<dbReference type="FunCoup" id="F4JKQ7">
    <property type="interactions" value="3680"/>
</dbReference>
<dbReference type="iPTMnet" id="F4JKQ7"/>
<dbReference type="PaxDb" id="3702-AT4G09640.1"/>
<dbReference type="ProteomicsDB" id="236828"/>
<dbReference type="EnsemblPlants" id="AT4G09640.1">
    <property type="protein sequence ID" value="AT4G09640.1"/>
    <property type="gene ID" value="AT4G09640"/>
</dbReference>
<dbReference type="GeneID" id="826550"/>
<dbReference type="Gramene" id="AT4G09640.1">
    <property type="protein sequence ID" value="AT4G09640.1"/>
    <property type="gene ID" value="AT4G09640"/>
</dbReference>
<dbReference type="KEGG" id="ath:AT4G09640"/>
<dbReference type="Araport" id="AT4G09640"/>
<dbReference type="TAIR" id="AT4G09640">
    <property type="gene designation" value="ENOR3L6"/>
</dbReference>
<dbReference type="eggNOG" id="KOG2922">
    <property type="taxonomic scope" value="Eukaryota"/>
</dbReference>
<dbReference type="HOGENOM" id="CLU_012349_1_1_1"/>
<dbReference type="InParanoid" id="F4JKQ7"/>
<dbReference type="OMA" id="WWLGICS"/>
<dbReference type="OrthoDB" id="6428174at2759"/>
<dbReference type="PRO" id="PR:F4JKQ7"/>
<dbReference type="Proteomes" id="UP000006548">
    <property type="component" value="Chromosome 4"/>
</dbReference>
<dbReference type="ExpressionAtlas" id="F4JKQ7">
    <property type="expression patterns" value="baseline and differential"/>
</dbReference>
<dbReference type="GO" id="GO:0005769">
    <property type="term" value="C:early endosome"/>
    <property type="evidence" value="ECO:0000250"/>
    <property type="project" value="UniProtKB"/>
</dbReference>
<dbReference type="GO" id="GO:0005886">
    <property type="term" value="C:plasma membrane"/>
    <property type="evidence" value="ECO:0000250"/>
    <property type="project" value="UniProtKB"/>
</dbReference>
<dbReference type="GO" id="GO:0015095">
    <property type="term" value="F:magnesium ion transmembrane transporter activity"/>
    <property type="evidence" value="ECO:0007669"/>
    <property type="project" value="InterPro"/>
</dbReference>
<dbReference type="GO" id="GO:0015693">
    <property type="term" value="P:magnesium ion transport"/>
    <property type="evidence" value="ECO:0000250"/>
    <property type="project" value="UniProtKB"/>
</dbReference>
<dbReference type="InterPro" id="IPR008521">
    <property type="entry name" value="Mg_trans_NIPA"/>
</dbReference>
<dbReference type="PANTHER" id="PTHR12570">
    <property type="match status" value="1"/>
</dbReference>
<dbReference type="PANTHER" id="PTHR12570:SF89">
    <property type="entry name" value="MAGNESIUM TRANSPORTER NIPA3-RELATED"/>
    <property type="match status" value="1"/>
</dbReference>
<dbReference type="Pfam" id="PF05653">
    <property type="entry name" value="Mg_trans_NIPA"/>
    <property type="match status" value="1"/>
</dbReference>
<dbReference type="SUPFAM" id="SSF103481">
    <property type="entry name" value="Multidrug resistance efflux transporter EmrE"/>
    <property type="match status" value="1"/>
</dbReference>
<comment type="function">
    <text evidence="1">Acts as a Mg(2+) transporter. Can also transport other divalent cations such as Fe(2+), Sr(2+), Ba(2+), Mn(2+) and Co(2+) but to a much less extent than Mg(2+) (By similarity).</text>
</comment>
<comment type="subunit">
    <text evidence="1">Homodimer.</text>
</comment>
<comment type="subcellular location">
    <subcellularLocation>
        <location evidence="1">Cell membrane</location>
        <topology evidence="1">Multi-pass membrane protein</topology>
    </subcellularLocation>
    <subcellularLocation>
        <location evidence="1">Early endosome</location>
    </subcellularLocation>
    <text evidence="1">Recruited to the cell membrane in response to low extracellular magnesium.</text>
</comment>
<comment type="similarity">
    <text evidence="4">Belongs to the NIPA (TC 2.A.7) family.</text>
</comment>
<comment type="sequence caution" evidence="4">
    <conflict type="frameshift">
        <sequence resource="EMBL" id="AK228399"/>
    </conflict>
</comment>
<comment type="sequence caution" evidence="4">
    <conflict type="frameshift">
        <sequence resource="EMBL" id="BT005717"/>
    </conflict>
</comment>
<comment type="sequence caution" evidence="4">
    <conflict type="erroneous gene model prediction">
        <sequence resource="EMBL-CDS" id="CAB78087"/>
    </conflict>
</comment>
<comment type="sequence caution" evidence="4">
    <conflict type="erroneous gene model prediction">
        <sequence resource="EMBL-CDS" id="CAB82131"/>
    </conflict>
</comment>
<name>NIPA5_ARATH</name>